<dbReference type="EMBL" id="AJ749949">
    <property type="protein sequence ID" value="CAG46132.1"/>
    <property type="molecule type" value="Genomic_DNA"/>
</dbReference>
<dbReference type="RefSeq" id="YP_170434.1">
    <property type="nucleotide sequence ID" value="NC_006570.2"/>
</dbReference>
<dbReference type="SMR" id="Q5NEV8"/>
<dbReference type="IntAct" id="Q5NEV8">
    <property type="interactions" value="1"/>
</dbReference>
<dbReference type="STRING" id="177416.FTT_1499"/>
<dbReference type="DNASU" id="3192057"/>
<dbReference type="EnsemblBacteria" id="CAG46132">
    <property type="protein sequence ID" value="CAG46132"/>
    <property type="gene ID" value="FTT_1499"/>
</dbReference>
<dbReference type="KEGG" id="ftu:FTT_1499"/>
<dbReference type="eggNOG" id="COG0249">
    <property type="taxonomic scope" value="Bacteria"/>
</dbReference>
<dbReference type="OrthoDB" id="9802448at2"/>
<dbReference type="Proteomes" id="UP000001174">
    <property type="component" value="Chromosome"/>
</dbReference>
<dbReference type="GO" id="GO:0005829">
    <property type="term" value="C:cytosol"/>
    <property type="evidence" value="ECO:0007669"/>
    <property type="project" value="TreeGrafter"/>
</dbReference>
<dbReference type="GO" id="GO:0005524">
    <property type="term" value="F:ATP binding"/>
    <property type="evidence" value="ECO:0007669"/>
    <property type="project" value="UniProtKB-UniRule"/>
</dbReference>
<dbReference type="GO" id="GO:0140664">
    <property type="term" value="F:ATP-dependent DNA damage sensor activity"/>
    <property type="evidence" value="ECO:0007669"/>
    <property type="project" value="InterPro"/>
</dbReference>
<dbReference type="GO" id="GO:0003684">
    <property type="term" value="F:damaged DNA binding"/>
    <property type="evidence" value="ECO:0007669"/>
    <property type="project" value="UniProtKB-UniRule"/>
</dbReference>
<dbReference type="GO" id="GO:0030983">
    <property type="term" value="F:mismatched DNA binding"/>
    <property type="evidence" value="ECO:0007669"/>
    <property type="project" value="InterPro"/>
</dbReference>
<dbReference type="GO" id="GO:0006298">
    <property type="term" value="P:mismatch repair"/>
    <property type="evidence" value="ECO:0007669"/>
    <property type="project" value="UniProtKB-UniRule"/>
</dbReference>
<dbReference type="FunFam" id="1.10.1420.10:FF:000002">
    <property type="entry name" value="DNA mismatch repair protein MutS"/>
    <property type="match status" value="1"/>
</dbReference>
<dbReference type="FunFam" id="3.40.1170.10:FF:000001">
    <property type="entry name" value="DNA mismatch repair protein MutS"/>
    <property type="match status" value="1"/>
</dbReference>
<dbReference type="FunFam" id="3.40.50.300:FF:000870">
    <property type="entry name" value="MutS protein homolog 4"/>
    <property type="match status" value="1"/>
</dbReference>
<dbReference type="Gene3D" id="1.10.1420.10">
    <property type="match status" value="2"/>
</dbReference>
<dbReference type="Gene3D" id="3.40.1170.10">
    <property type="entry name" value="DNA repair protein MutS, domain I"/>
    <property type="match status" value="1"/>
</dbReference>
<dbReference type="Gene3D" id="3.30.420.110">
    <property type="entry name" value="MutS, connector domain"/>
    <property type="match status" value="1"/>
</dbReference>
<dbReference type="Gene3D" id="3.40.50.300">
    <property type="entry name" value="P-loop containing nucleotide triphosphate hydrolases"/>
    <property type="match status" value="1"/>
</dbReference>
<dbReference type="HAMAP" id="MF_00096">
    <property type="entry name" value="MutS"/>
    <property type="match status" value="1"/>
</dbReference>
<dbReference type="InterPro" id="IPR005748">
    <property type="entry name" value="DNA_mismatch_repair_MutS"/>
</dbReference>
<dbReference type="InterPro" id="IPR007695">
    <property type="entry name" value="DNA_mismatch_repair_MutS-lik_N"/>
</dbReference>
<dbReference type="InterPro" id="IPR017261">
    <property type="entry name" value="DNA_mismatch_repair_MutS/MSH"/>
</dbReference>
<dbReference type="InterPro" id="IPR000432">
    <property type="entry name" value="DNA_mismatch_repair_MutS_C"/>
</dbReference>
<dbReference type="InterPro" id="IPR007861">
    <property type="entry name" value="DNA_mismatch_repair_MutS_clamp"/>
</dbReference>
<dbReference type="InterPro" id="IPR007696">
    <property type="entry name" value="DNA_mismatch_repair_MutS_core"/>
</dbReference>
<dbReference type="InterPro" id="IPR016151">
    <property type="entry name" value="DNA_mismatch_repair_MutS_N"/>
</dbReference>
<dbReference type="InterPro" id="IPR036187">
    <property type="entry name" value="DNA_mismatch_repair_MutS_sf"/>
</dbReference>
<dbReference type="InterPro" id="IPR007860">
    <property type="entry name" value="DNA_mmatch_repair_MutS_con_dom"/>
</dbReference>
<dbReference type="InterPro" id="IPR045076">
    <property type="entry name" value="MutS"/>
</dbReference>
<dbReference type="InterPro" id="IPR036678">
    <property type="entry name" value="MutS_con_dom_sf"/>
</dbReference>
<dbReference type="InterPro" id="IPR027417">
    <property type="entry name" value="P-loop_NTPase"/>
</dbReference>
<dbReference type="NCBIfam" id="TIGR01070">
    <property type="entry name" value="mutS1"/>
    <property type="match status" value="1"/>
</dbReference>
<dbReference type="NCBIfam" id="NF003810">
    <property type="entry name" value="PRK05399.1"/>
    <property type="match status" value="1"/>
</dbReference>
<dbReference type="PANTHER" id="PTHR11361:SF34">
    <property type="entry name" value="DNA MISMATCH REPAIR PROTEIN MSH1, MITOCHONDRIAL"/>
    <property type="match status" value="1"/>
</dbReference>
<dbReference type="PANTHER" id="PTHR11361">
    <property type="entry name" value="DNA MISMATCH REPAIR PROTEIN MUTS FAMILY MEMBER"/>
    <property type="match status" value="1"/>
</dbReference>
<dbReference type="Pfam" id="PF01624">
    <property type="entry name" value="MutS_I"/>
    <property type="match status" value="1"/>
</dbReference>
<dbReference type="Pfam" id="PF05188">
    <property type="entry name" value="MutS_II"/>
    <property type="match status" value="1"/>
</dbReference>
<dbReference type="Pfam" id="PF05192">
    <property type="entry name" value="MutS_III"/>
    <property type="match status" value="1"/>
</dbReference>
<dbReference type="Pfam" id="PF05190">
    <property type="entry name" value="MutS_IV"/>
    <property type="match status" value="1"/>
</dbReference>
<dbReference type="Pfam" id="PF00488">
    <property type="entry name" value="MutS_V"/>
    <property type="match status" value="1"/>
</dbReference>
<dbReference type="PIRSF" id="PIRSF037677">
    <property type="entry name" value="DNA_mis_repair_Msh6"/>
    <property type="match status" value="1"/>
</dbReference>
<dbReference type="SMART" id="SM00534">
    <property type="entry name" value="MUTSac"/>
    <property type="match status" value="1"/>
</dbReference>
<dbReference type="SMART" id="SM00533">
    <property type="entry name" value="MUTSd"/>
    <property type="match status" value="1"/>
</dbReference>
<dbReference type="SUPFAM" id="SSF55271">
    <property type="entry name" value="DNA repair protein MutS, domain I"/>
    <property type="match status" value="1"/>
</dbReference>
<dbReference type="SUPFAM" id="SSF53150">
    <property type="entry name" value="DNA repair protein MutS, domain II"/>
    <property type="match status" value="1"/>
</dbReference>
<dbReference type="SUPFAM" id="SSF48334">
    <property type="entry name" value="DNA repair protein MutS, domain III"/>
    <property type="match status" value="1"/>
</dbReference>
<dbReference type="SUPFAM" id="SSF52540">
    <property type="entry name" value="P-loop containing nucleoside triphosphate hydrolases"/>
    <property type="match status" value="1"/>
</dbReference>
<dbReference type="PROSITE" id="PS00486">
    <property type="entry name" value="DNA_MISMATCH_REPAIR_2"/>
    <property type="match status" value="1"/>
</dbReference>
<name>MUTS_FRATT</name>
<accession>Q5NEV8</accession>
<gene>
    <name evidence="1" type="primary">mutS</name>
    <name type="ordered locus">FTT_1499</name>
</gene>
<evidence type="ECO:0000255" key="1">
    <source>
        <dbReference type="HAMAP-Rule" id="MF_00096"/>
    </source>
</evidence>
<feature type="chain" id="PRO_0000224373" description="DNA mismatch repair protein MutS">
    <location>
        <begin position="1"/>
        <end position="857"/>
    </location>
</feature>
<feature type="binding site" evidence="1">
    <location>
        <begin position="621"/>
        <end position="628"/>
    </location>
    <ligand>
        <name>ATP</name>
        <dbReference type="ChEBI" id="CHEBI:30616"/>
    </ligand>
</feature>
<reference key="1">
    <citation type="journal article" date="2005" name="Nat. Genet.">
        <title>The complete genome sequence of Francisella tularensis, the causative agent of tularemia.</title>
        <authorList>
            <person name="Larsson P."/>
            <person name="Oyston P.C.F."/>
            <person name="Chain P."/>
            <person name="Chu M.C."/>
            <person name="Duffield M."/>
            <person name="Fuxelius H.-H."/>
            <person name="Garcia E."/>
            <person name="Haelltorp G."/>
            <person name="Johansson D."/>
            <person name="Isherwood K.E."/>
            <person name="Karp P.D."/>
            <person name="Larsson E."/>
            <person name="Liu Y."/>
            <person name="Michell S."/>
            <person name="Prior J."/>
            <person name="Prior R."/>
            <person name="Malfatti S."/>
            <person name="Sjoestedt A."/>
            <person name="Svensson K."/>
            <person name="Thompson N."/>
            <person name="Vergez L."/>
            <person name="Wagg J.K."/>
            <person name="Wren B.W."/>
            <person name="Lindler L.E."/>
            <person name="Andersson S.G.E."/>
            <person name="Forsman M."/>
            <person name="Titball R.W."/>
        </authorList>
    </citation>
    <scope>NUCLEOTIDE SEQUENCE [LARGE SCALE GENOMIC DNA]</scope>
    <source>
        <strain>SCHU S4 / Schu 4</strain>
    </source>
</reference>
<sequence>MLTKRFYNLAIMQDISNHTPMIQQYLKIKSQYQDILLFYRMGDFYELFFDDAKKAAELLDITLTARGKSNGESIPMAGVPYHAAEAYIAKIVKKGLSIAICEQTGDPNTSKGPVERQVTRIITPATVSEEAFLDNNQDSILVSIFEKNNKYYLAYTSYTQGKIYLVKTLTSLNELKNTVLKLSPQEIITNSRELAQQNPFKKPIKALEEWYYSNFEAKKYINDSLDTNIANNILNLYKNDQLTTIGSILSYLTNILKDTPRHITDISYEQEQDTLNIDINSRINLELDNNSKSSLLSIIGKCKTSLGSRLLKRYFSNPTRNLNILATRHSIINSLGENQHFLKIQDVLSYISDIERIISRVALGTVKPKDLVALRDSLEQLPILKKLLSEKNTPEITNINNRIHQLDELVTLLDKAIIENPPTTIRDGGVIKEGFDKELDELKSIKDNSYDFLIKFEELQKQKTGISTLKVGYNSVHGYYIELSKQHADKIPTEYVRRQTLKASERYITEELKNFEDKVLSSKEKALAREKLIYDTLLKKVIEYYKQIQETAASIAEIDVLANFAERAIKLKLSQPKFNNLAKLELKEVRHLAIEHNIDEPFIPNDTLLSKDTNTLQIITGPNMGGKSTYMRQVAQLIFLAYIGSFVPASYADICDIDTIYTRIGASDDISSGRSTFMVEMTETAYILNNASAKSLVIMDEIGRGTSTFDGLALAKACAEKFAQIGAFTLFATHYFELTELAKQYPNVCNIHFEAKEYKDNIYFMHKAVTGAAKKSYGIQVAKLAGISQDVLESAKQNLYNLEKKQQLTESTQVQAQFQLEPTTQNPLQQKLDAIDINTITPLEALNILFELKKTLI</sequence>
<protein>
    <recommendedName>
        <fullName evidence="1">DNA mismatch repair protein MutS</fullName>
    </recommendedName>
</protein>
<comment type="function">
    <text evidence="1">This protein is involved in the repair of mismatches in DNA. It is possible that it carries out the mismatch recognition step. This protein has a weak ATPase activity.</text>
</comment>
<comment type="similarity">
    <text evidence="1">Belongs to the DNA mismatch repair MutS family.</text>
</comment>
<keyword id="KW-0067">ATP-binding</keyword>
<keyword id="KW-0227">DNA damage</keyword>
<keyword id="KW-0234">DNA repair</keyword>
<keyword id="KW-0238">DNA-binding</keyword>
<keyword id="KW-0547">Nucleotide-binding</keyword>
<keyword id="KW-1185">Reference proteome</keyword>
<proteinExistence type="inferred from homology"/>
<organism>
    <name type="scientific">Francisella tularensis subsp. tularensis (strain SCHU S4 / Schu 4)</name>
    <dbReference type="NCBI Taxonomy" id="177416"/>
    <lineage>
        <taxon>Bacteria</taxon>
        <taxon>Pseudomonadati</taxon>
        <taxon>Pseudomonadota</taxon>
        <taxon>Gammaproteobacteria</taxon>
        <taxon>Thiotrichales</taxon>
        <taxon>Francisellaceae</taxon>
        <taxon>Francisella</taxon>
    </lineage>
</organism>